<organism>
    <name type="scientific">Bos taurus</name>
    <name type="common">Bovine</name>
    <dbReference type="NCBI Taxonomy" id="9913"/>
    <lineage>
        <taxon>Eukaryota</taxon>
        <taxon>Metazoa</taxon>
        <taxon>Chordata</taxon>
        <taxon>Craniata</taxon>
        <taxon>Vertebrata</taxon>
        <taxon>Euteleostomi</taxon>
        <taxon>Mammalia</taxon>
        <taxon>Eutheria</taxon>
        <taxon>Laurasiatheria</taxon>
        <taxon>Artiodactyla</taxon>
        <taxon>Ruminantia</taxon>
        <taxon>Pecora</taxon>
        <taxon>Bovidae</taxon>
        <taxon>Bovinae</taxon>
        <taxon>Bos</taxon>
    </lineage>
</organism>
<feature type="chain" id="PRO_0000409502" description="E3 ubiquitin-protein ligase RNF146-A">
    <location>
        <begin position="1"/>
        <end position="346"/>
    </location>
</feature>
<feature type="domain" description="WWE" evidence="3">
    <location>
        <begin position="91"/>
        <end position="167"/>
    </location>
</feature>
<feature type="zinc finger region" description="RING-type" evidence="2">
    <location>
        <begin position="37"/>
        <end position="75"/>
    </location>
</feature>
<feature type="region of interest" description="Disordered" evidence="4">
    <location>
        <begin position="195"/>
        <end position="240"/>
    </location>
</feature>
<feature type="region of interest" description="Disordered" evidence="4">
    <location>
        <begin position="256"/>
        <end position="301"/>
    </location>
</feature>
<feature type="compositionally biased region" description="Low complexity" evidence="4">
    <location>
        <begin position="202"/>
        <end position="216"/>
    </location>
</feature>
<feature type="compositionally biased region" description="Acidic residues" evidence="4">
    <location>
        <begin position="281"/>
        <end position="295"/>
    </location>
</feature>
<dbReference type="EC" id="2.3.2.27"/>
<dbReference type="EMBL" id="AAFC03114389">
    <property type="status" value="NOT_ANNOTATED_CDS"/>
    <property type="molecule type" value="Genomic_DNA"/>
</dbReference>
<dbReference type="BMRB" id="E1B7X3"/>
<dbReference type="SMR" id="E1B7X3"/>
<dbReference type="FunCoup" id="E1B7X3">
    <property type="interactions" value="1470"/>
</dbReference>
<dbReference type="PaxDb" id="9913-ENSBTAP00000047470"/>
<dbReference type="eggNOG" id="KOG0824">
    <property type="taxonomic scope" value="Eukaryota"/>
</dbReference>
<dbReference type="HOGENOM" id="CLU_067425_0_0_1"/>
<dbReference type="InParanoid" id="E1B7X3"/>
<dbReference type="TreeFam" id="TF318925"/>
<dbReference type="UniPathway" id="UPA00143"/>
<dbReference type="Proteomes" id="UP000009136">
    <property type="component" value="Unplaced"/>
</dbReference>
<dbReference type="GO" id="GO:0005737">
    <property type="term" value="C:cytoplasm"/>
    <property type="evidence" value="ECO:0000318"/>
    <property type="project" value="GO_Central"/>
</dbReference>
<dbReference type="GO" id="GO:0005829">
    <property type="term" value="C:cytosol"/>
    <property type="evidence" value="ECO:0000250"/>
    <property type="project" value="UniProtKB"/>
</dbReference>
<dbReference type="GO" id="GO:0005634">
    <property type="term" value="C:nucleus"/>
    <property type="evidence" value="ECO:0000318"/>
    <property type="project" value="GO_Central"/>
</dbReference>
<dbReference type="GO" id="GO:0072572">
    <property type="term" value="F:poly-ADP-D-ribose binding"/>
    <property type="evidence" value="ECO:0000250"/>
    <property type="project" value="UniProtKB"/>
</dbReference>
<dbReference type="GO" id="GO:0061630">
    <property type="term" value="F:ubiquitin protein ligase activity"/>
    <property type="evidence" value="ECO:0007669"/>
    <property type="project" value="InterPro"/>
</dbReference>
<dbReference type="GO" id="GO:0004842">
    <property type="term" value="F:ubiquitin-protein transferase activity"/>
    <property type="evidence" value="ECO:0000250"/>
    <property type="project" value="UniProtKB"/>
</dbReference>
<dbReference type="GO" id="GO:0008270">
    <property type="term" value="F:zinc ion binding"/>
    <property type="evidence" value="ECO:0007669"/>
    <property type="project" value="UniProtKB-KW"/>
</dbReference>
<dbReference type="GO" id="GO:0090263">
    <property type="term" value="P:positive regulation of canonical Wnt signaling pathway"/>
    <property type="evidence" value="ECO:0000250"/>
    <property type="project" value="UniProtKB"/>
</dbReference>
<dbReference type="GO" id="GO:0051865">
    <property type="term" value="P:protein autoubiquitination"/>
    <property type="evidence" value="ECO:0000250"/>
    <property type="project" value="UniProtKB"/>
</dbReference>
<dbReference type="GO" id="GO:0070936">
    <property type="term" value="P:protein K48-linked ubiquitination"/>
    <property type="evidence" value="ECO:0000250"/>
    <property type="project" value="UniProtKB"/>
</dbReference>
<dbReference type="GO" id="GO:0006511">
    <property type="term" value="P:ubiquitin-dependent protein catabolic process"/>
    <property type="evidence" value="ECO:0000250"/>
    <property type="project" value="UniProtKB"/>
</dbReference>
<dbReference type="GO" id="GO:0016055">
    <property type="term" value="P:Wnt signaling pathway"/>
    <property type="evidence" value="ECO:0007669"/>
    <property type="project" value="UniProtKB-KW"/>
</dbReference>
<dbReference type="CDD" id="cd16546">
    <property type="entry name" value="RING-HC_RNF146"/>
    <property type="match status" value="1"/>
</dbReference>
<dbReference type="FunFam" id="3.30.40.10:FF:000204">
    <property type="entry name" value="E3 ubiquitin-protein ligase RNF146"/>
    <property type="match status" value="1"/>
</dbReference>
<dbReference type="FunFam" id="3.30.720.50:FF:000003">
    <property type="entry name" value="E3 ubiquitin-protein ligase RNF146"/>
    <property type="match status" value="1"/>
</dbReference>
<dbReference type="Gene3D" id="3.30.720.50">
    <property type="match status" value="1"/>
</dbReference>
<dbReference type="Gene3D" id="3.30.40.10">
    <property type="entry name" value="Zinc/RING finger domain, C3HC4 (zinc finger)"/>
    <property type="match status" value="1"/>
</dbReference>
<dbReference type="InterPro" id="IPR044110">
    <property type="entry name" value="RING-HC_RNF146"/>
</dbReference>
<dbReference type="InterPro" id="IPR033509">
    <property type="entry name" value="RNF146"/>
</dbReference>
<dbReference type="InterPro" id="IPR018123">
    <property type="entry name" value="WWE-dom_subgr"/>
</dbReference>
<dbReference type="InterPro" id="IPR004170">
    <property type="entry name" value="WWE_dom"/>
</dbReference>
<dbReference type="InterPro" id="IPR037197">
    <property type="entry name" value="WWE_dom_sf"/>
</dbReference>
<dbReference type="InterPro" id="IPR001841">
    <property type="entry name" value="Znf_RING"/>
</dbReference>
<dbReference type="InterPro" id="IPR013083">
    <property type="entry name" value="Znf_RING/FYVE/PHD"/>
</dbReference>
<dbReference type="InterPro" id="IPR017907">
    <property type="entry name" value="Znf_RING_CS"/>
</dbReference>
<dbReference type="PANTHER" id="PTHR13417">
    <property type="entry name" value="E3 UBIQUITIN-PROTEIN LIGASE RNF146"/>
    <property type="match status" value="1"/>
</dbReference>
<dbReference type="PANTHER" id="PTHR13417:SF2">
    <property type="entry name" value="E3 UBIQUITIN-PROTEIN LIGASE RNF146"/>
    <property type="match status" value="1"/>
</dbReference>
<dbReference type="Pfam" id="PF02825">
    <property type="entry name" value="WWE"/>
    <property type="match status" value="1"/>
</dbReference>
<dbReference type="Pfam" id="PF13920">
    <property type="entry name" value="zf-C3HC4_3"/>
    <property type="match status" value="1"/>
</dbReference>
<dbReference type="SMART" id="SM00184">
    <property type="entry name" value="RING"/>
    <property type="match status" value="1"/>
</dbReference>
<dbReference type="SMART" id="SM00678">
    <property type="entry name" value="WWE"/>
    <property type="match status" value="1"/>
</dbReference>
<dbReference type="SUPFAM" id="SSF57850">
    <property type="entry name" value="RING/U-box"/>
    <property type="match status" value="1"/>
</dbReference>
<dbReference type="SUPFAM" id="SSF117839">
    <property type="entry name" value="WWE domain"/>
    <property type="match status" value="1"/>
</dbReference>
<dbReference type="PROSITE" id="PS50918">
    <property type="entry name" value="WWE"/>
    <property type="match status" value="1"/>
</dbReference>
<dbReference type="PROSITE" id="PS00518">
    <property type="entry name" value="ZF_RING_1"/>
    <property type="match status" value="1"/>
</dbReference>
<dbReference type="PROSITE" id="PS50089">
    <property type="entry name" value="ZF_RING_2"/>
    <property type="match status" value="1"/>
</dbReference>
<sequence>MMAGCGETDHSINMLPTNRKANESCSNTAPSLTVPECAICLQTCVHPVSLPCKHVFCYLCVKGASWLGKRCALCRQEIPEDFLDRPTLLSPELKAASRGNGEYAWYYEGRNGWWQYDERTSRELEDAFSKGKKSTEMLIAGFLYVADLENMVQYRRNEHGRRRKIKRDIIDIPKKGVAGLRLDCDANTVNLARESSADGADSVPAQSGASVQSSSVRPLTSVDGQLTSPATPSPDVGTSLEDSFAHLQLGGDSIAERSHRGEGEEEHESPSSGRVPAPDTSIEETESDASSDSEDVSALVAQHSLTQQRLLVPNPSQTVSDRSVAAGGIVSVRSRRPDGQCTVTEV</sequence>
<name>R146A_BOVIN</name>
<reference key="1">
    <citation type="journal article" date="2009" name="Science">
        <title>The genome sequence of taurine cattle: a window to ruminant biology and evolution.</title>
        <authorList>
            <consortium name="The bovine genome sequencing and analysis consortium"/>
        </authorList>
    </citation>
    <scope>NUCLEOTIDE SEQUENCE [LARGE SCALE GENOMIC DNA]</scope>
</reference>
<evidence type="ECO:0000250" key="1"/>
<evidence type="ECO:0000255" key="2">
    <source>
        <dbReference type="PROSITE-ProRule" id="PRU00175"/>
    </source>
</evidence>
<evidence type="ECO:0000255" key="3">
    <source>
        <dbReference type="PROSITE-ProRule" id="PRU00248"/>
    </source>
</evidence>
<evidence type="ECO:0000256" key="4">
    <source>
        <dbReference type="SAM" id="MobiDB-lite"/>
    </source>
</evidence>
<evidence type="ECO:0000305" key="5"/>
<accession>E1B7X3</accession>
<comment type="function">
    <text evidence="1">E3 ubiquitin-protein ligase that specifically binds poly-ADP-ribosylated proteins and mediates their ubiquitination and subsequent degradation. Acts as an activator of the Wnt signaling pathway by mediating the ubiquitination of poly-ADP-ribosylated AXIN1 and AXIN2, 2 key components of the beta-catenin destruction complex. Acts in cooperation with tankyrase proteins (TNKS and TNKS2), which mediate poly-ADP-ribosylation of target proteins AXIN1, AXIN2, BLZF1, CASC3, TNKS and TNKS2. Recognizes and binds tankyrase-dependent poly-ADP-ribosylated proteins via its WWE domain and mediates their ubiquitination (By similarity).</text>
</comment>
<comment type="catalytic activity">
    <reaction>
        <text>S-ubiquitinyl-[E2 ubiquitin-conjugating enzyme]-L-cysteine + [acceptor protein]-L-lysine = [E2 ubiquitin-conjugating enzyme]-L-cysteine + N(6)-ubiquitinyl-[acceptor protein]-L-lysine.</text>
        <dbReference type="EC" id="2.3.2.27"/>
    </reaction>
</comment>
<comment type="pathway">
    <text>Protein modification; protein ubiquitination.</text>
</comment>
<comment type="subunit">
    <text evidence="1">Interacts with poly-ADP-ribosylated AXIN1, AXIN2, BLZF1 and CASC3.</text>
</comment>
<comment type="subcellular location">
    <subcellularLocation>
        <location evidence="1">Cytoplasm</location>
        <location evidence="1">Cytosol</location>
    </subcellularLocation>
</comment>
<comment type="domain">
    <text evidence="1">The WWE domain mediates non-covalent poly(ADP-ribose)-binding.</text>
</comment>
<comment type="PTM">
    <text evidence="1">Ubiquitinated; autoubiquitinated. Autoubiquitination is enhanced upon poly(ADP-ribose)-binding (By similarity).</text>
</comment>
<proteinExistence type="inferred from homology"/>
<protein>
    <recommendedName>
        <fullName>E3 ubiquitin-protein ligase RNF146-A</fullName>
        <ecNumber>2.3.2.27</ecNumber>
    </recommendedName>
    <alternativeName>
        <fullName>RING finger protein 146-A</fullName>
    </alternativeName>
    <alternativeName>
        <fullName evidence="5">RING-type E3 ubiquitin transferase RNF146-A</fullName>
    </alternativeName>
</protein>
<gene>
    <name type="primary">RNF146A</name>
</gene>
<keyword id="KW-0963">Cytoplasm</keyword>
<keyword id="KW-0479">Metal-binding</keyword>
<keyword id="KW-1185">Reference proteome</keyword>
<keyword id="KW-0808">Transferase</keyword>
<keyword id="KW-0832">Ubl conjugation</keyword>
<keyword id="KW-0833">Ubl conjugation pathway</keyword>
<keyword id="KW-0879">Wnt signaling pathway</keyword>
<keyword id="KW-0862">Zinc</keyword>
<keyword id="KW-0863">Zinc-finger</keyword>